<name>DKGB_YERPE</name>
<gene>
    <name evidence="2" type="primary">dkgB</name>
    <name type="synonym">ara13</name>
    <name type="ordered locus">YPO1075</name>
    <name type="ordered locus">y3101</name>
    <name type="ordered locus">YP_2774</name>
</gene>
<organism>
    <name type="scientific">Yersinia pestis</name>
    <dbReference type="NCBI Taxonomy" id="632"/>
    <lineage>
        <taxon>Bacteria</taxon>
        <taxon>Pseudomonadati</taxon>
        <taxon>Pseudomonadota</taxon>
        <taxon>Gammaproteobacteria</taxon>
        <taxon>Enterobacterales</taxon>
        <taxon>Yersiniaceae</taxon>
        <taxon>Yersinia</taxon>
    </lineage>
</organism>
<reference key="1">
    <citation type="journal article" date="2001" name="Nature">
        <title>Genome sequence of Yersinia pestis, the causative agent of plague.</title>
        <authorList>
            <person name="Parkhill J."/>
            <person name="Wren B.W."/>
            <person name="Thomson N.R."/>
            <person name="Titball R.W."/>
            <person name="Holden M.T.G."/>
            <person name="Prentice M.B."/>
            <person name="Sebaihia M."/>
            <person name="James K.D."/>
            <person name="Churcher C.M."/>
            <person name="Mungall K.L."/>
            <person name="Baker S."/>
            <person name="Basham D."/>
            <person name="Bentley S.D."/>
            <person name="Brooks K."/>
            <person name="Cerdeno-Tarraga A.-M."/>
            <person name="Chillingworth T."/>
            <person name="Cronin A."/>
            <person name="Davies R.M."/>
            <person name="Davis P."/>
            <person name="Dougan G."/>
            <person name="Feltwell T."/>
            <person name="Hamlin N."/>
            <person name="Holroyd S."/>
            <person name="Jagels K."/>
            <person name="Karlyshev A.V."/>
            <person name="Leather S."/>
            <person name="Moule S."/>
            <person name="Oyston P.C.F."/>
            <person name="Quail M.A."/>
            <person name="Rutherford K.M."/>
            <person name="Simmonds M."/>
            <person name="Skelton J."/>
            <person name="Stevens K."/>
            <person name="Whitehead S."/>
            <person name="Barrell B.G."/>
        </authorList>
    </citation>
    <scope>NUCLEOTIDE SEQUENCE [LARGE SCALE GENOMIC DNA]</scope>
    <source>
        <strain>CO-92 / Biovar Orientalis</strain>
    </source>
</reference>
<reference key="2">
    <citation type="journal article" date="2002" name="J. Bacteriol.">
        <title>Genome sequence of Yersinia pestis KIM.</title>
        <authorList>
            <person name="Deng W."/>
            <person name="Burland V."/>
            <person name="Plunkett G. III"/>
            <person name="Boutin A."/>
            <person name="Mayhew G.F."/>
            <person name="Liss P."/>
            <person name="Perna N.T."/>
            <person name="Rose D.J."/>
            <person name="Mau B."/>
            <person name="Zhou S."/>
            <person name="Schwartz D.C."/>
            <person name="Fetherston J.D."/>
            <person name="Lindler L.E."/>
            <person name="Brubaker R.R."/>
            <person name="Plano G.V."/>
            <person name="Straley S.C."/>
            <person name="McDonough K.A."/>
            <person name="Nilles M.L."/>
            <person name="Matson J.S."/>
            <person name="Blattner F.R."/>
            <person name="Perry R.D."/>
        </authorList>
    </citation>
    <scope>NUCLEOTIDE SEQUENCE [LARGE SCALE GENOMIC DNA]</scope>
    <source>
        <strain>KIM10+ / Biovar Mediaevalis</strain>
    </source>
</reference>
<reference key="3">
    <citation type="journal article" date="2004" name="DNA Res.">
        <title>Complete genome sequence of Yersinia pestis strain 91001, an isolate avirulent to humans.</title>
        <authorList>
            <person name="Song Y."/>
            <person name="Tong Z."/>
            <person name="Wang J."/>
            <person name="Wang L."/>
            <person name="Guo Z."/>
            <person name="Han Y."/>
            <person name="Zhang J."/>
            <person name="Pei D."/>
            <person name="Zhou D."/>
            <person name="Qin H."/>
            <person name="Pang X."/>
            <person name="Han Y."/>
            <person name="Zhai J."/>
            <person name="Li M."/>
            <person name="Cui B."/>
            <person name="Qi Z."/>
            <person name="Jin L."/>
            <person name="Dai R."/>
            <person name="Chen F."/>
            <person name="Li S."/>
            <person name="Ye C."/>
            <person name="Du Z."/>
            <person name="Lin W."/>
            <person name="Wang J."/>
            <person name="Yu J."/>
            <person name="Yang H."/>
            <person name="Wang J."/>
            <person name="Huang P."/>
            <person name="Yang R."/>
        </authorList>
    </citation>
    <scope>NUCLEOTIDE SEQUENCE [LARGE SCALE GENOMIC DNA]</scope>
    <source>
        <strain>91001 / Biovar Mediaevalis</strain>
    </source>
</reference>
<evidence type="ECO:0000250" key="1"/>
<evidence type="ECO:0000250" key="2">
    <source>
        <dbReference type="UniProtKB" id="P30863"/>
    </source>
</evidence>
<evidence type="ECO:0000305" key="3"/>
<keyword id="KW-0963">Cytoplasm</keyword>
<keyword id="KW-0521">NADP</keyword>
<keyword id="KW-0560">Oxidoreductase</keyword>
<keyword id="KW-1185">Reference proteome</keyword>
<dbReference type="EC" id="1.1.1.-" evidence="2"/>
<dbReference type="EMBL" id="AL590842">
    <property type="protein sequence ID" value="CAL19741.1"/>
    <property type="molecule type" value="Genomic_DNA"/>
</dbReference>
<dbReference type="EMBL" id="AE009952">
    <property type="protein sequence ID" value="AAM86651.1"/>
    <property type="molecule type" value="Genomic_DNA"/>
</dbReference>
<dbReference type="EMBL" id="AE017042">
    <property type="protein sequence ID" value="AAS62958.1"/>
    <property type="molecule type" value="Genomic_DNA"/>
</dbReference>
<dbReference type="PIR" id="AC0132">
    <property type="entry name" value="AC0132"/>
</dbReference>
<dbReference type="RefSeq" id="WP_002210693.1">
    <property type="nucleotide sequence ID" value="NZ_WUCM01000115.1"/>
</dbReference>
<dbReference type="RefSeq" id="YP_002346119.1">
    <property type="nucleotide sequence ID" value="NC_003143.1"/>
</dbReference>
<dbReference type="SMR" id="Q8ZH36"/>
<dbReference type="STRING" id="214092.YPO1075"/>
<dbReference type="PaxDb" id="214092-YPO1075"/>
<dbReference type="DNASU" id="1148048"/>
<dbReference type="EnsemblBacteria" id="AAS62958">
    <property type="protein sequence ID" value="AAS62958"/>
    <property type="gene ID" value="YP_2774"/>
</dbReference>
<dbReference type="GeneID" id="57977480"/>
<dbReference type="KEGG" id="ype:YPO1075"/>
<dbReference type="KEGG" id="ypk:y3101"/>
<dbReference type="KEGG" id="ypm:YP_2774"/>
<dbReference type="PATRIC" id="fig|214092.21.peg.1366"/>
<dbReference type="eggNOG" id="COG0656">
    <property type="taxonomic scope" value="Bacteria"/>
</dbReference>
<dbReference type="HOGENOM" id="CLU_023205_0_1_6"/>
<dbReference type="OMA" id="MVNQIFL"/>
<dbReference type="OrthoDB" id="9804790at2"/>
<dbReference type="Proteomes" id="UP000000815">
    <property type="component" value="Chromosome"/>
</dbReference>
<dbReference type="Proteomes" id="UP000001019">
    <property type="component" value="Chromosome"/>
</dbReference>
<dbReference type="Proteomes" id="UP000002490">
    <property type="component" value="Chromosome"/>
</dbReference>
<dbReference type="GO" id="GO:0005737">
    <property type="term" value="C:cytoplasm"/>
    <property type="evidence" value="ECO:0007669"/>
    <property type="project" value="UniProtKB-SubCell"/>
</dbReference>
<dbReference type="GO" id="GO:0004033">
    <property type="term" value="F:aldo-keto reductase (NADPH) activity"/>
    <property type="evidence" value="ECO:0000318"/>
    <property type="project" value="GO_Central"/>
</dbReference>
<dbReference type="GO" id="GO:1990002">
    <property type="term" value="F:methylglyoxal reductase (NADPH) (acetol producing) activity"/>
    <property type="evidence" value="ECO:0000318"/>
    <property type="project" value="GO_Central"/>
</dbReference>
<dbReference type="GO" id="GO:0019853">
    <property type="term" value="P:L-ascorbic acid biosynthetic process"/>
    <property type="evidence" value="ECO:0007669"/>
    <property type="project" value="UniProtKB-KW"/>
</dbReference>
<dbReference type="GO" id="GO:0051596">
    <property type="term" value="P:methylglyoxal catabolic process"/>
    <property type="evidence" value="ECO:0000318"/>
    <property type="project" value="GO_Central"/>
</dbReference>
<dbReference type="CDD" id="cd19139">
    <property type="entry name" value="AKR_AKR3F2"/>
    <property type="match status" value="1"/>
</dbReference>
<dbReference type="FunFam" id="3.20.20.100:FF:000002">
    <property type="entry name" value="2,5-diketo-D-gluconic acid reductase A"/>
    <property type="match status" value="1"/>
</dbReference>
<dbReference type="Gene3D" id="3.20.20.100">
    <property type="entry name" value="NADP-dependent oxidoreductase domain"/>
    <property type="match status" value="1"/>
</dbReference>
<dbReference type="InterPro" id="IPR020471">
    <property type="entry name" value="AKR"/>
</dbReference>
<dbReference type="InterPro" id="IPR018170">
    <property type="entry name" value="Aldo/ket_reductase_CS"/>
</dbReference>
<dbReference type="InterPro" id="IPR023210">
    <property type="entry name" value="NADP_OxRdtase_dom"/>
</dbReference>
<dbReference type="InterPro" id="IPR036812">
    <property type="entry name" value="NADP_OxRdtase_dom_sf"/>
</dbReference>
<dbReference type="NCBIfam" id="NF008377">
    <property type="entry name" value="PRK11172.1"/>
    <property type="match status" value="1"/>
</dbReference>
<dbReference type="PANTHER" id="PTHR43827">
    <property type="entry name" value="2,5-DIKETO-D-GLUCONIC ACID REDUCTASE"/>
    <property type="match status" value="1"/>
</dbReference>
<dbReference type="PANTHER" id="PTHR43827:SF3">
    <property type="entry name" value="NADP-DEPENDENT OXIDOREDUCTASE DOMAIN-CONTAINING PROTEIN"/>
    <property type="match status" value="1"/>
</dbReference>
<dbReference type="Pfam" id="PF00248">
    <property type="entry name" value="Aldo_ket_red"/>
    <property type="match status" value="1"/>
</dbReference>
<dbReference type="PIRSF" id="PIRSF000097">
    <property type="entry name" value="AKR"/>
    <property type="match status" value="1"/>
</dbReference>
<dbReference type="PRINTS" id="PR00069">
    <property type="entry name" value="ALDKETRDTASE"/>
</dbReference>
<dbReference type="SUPFAM" id="SSF51430">
    <property type="entry name" value="NAD(P)-linked oxidoreductase"/>
    <property type="match status" value="1"/>
</dbReference>
<dbReference type="PROSITE" id="PS00798">
    <property type="entry name" value="ALDOKETO_REDUCTASE_1"/>
    <property type="match status" value="1"/>
</dbReference>
<dbReference type="PROSITE" id="PS00062">
    <property type="entry name" value="ALDOKETO_REDUCTASE_2"/>
    <property type="match status" value="1"/>
</dbReference>
<proteinExistence type="inferred from homology"/>
<protein>
    <recommendedName>
        <fullName evidence="2">Methylglyoxal reductase DkgB</fullName>
        <ecNumber evidence="2">1.1.1.-</ecNumber>
    </recommendedName>
</protein>
<accession>Q8ZH36</accession>
<accession>Q0WHW9</accession>
<feature type="chain" id="PRO_0000124608" description="Methylglyoxal reductase DkgB">
    <location>
        <begin position="1"/>
        <end position="267"/>
    </location>
</feature>
<feature type="active site" description="Proton donor" evidence="1">
    <location>
        <position position="39"/>
    </location>
</feature>
<feature type="binding site" evidence="1">
    <location>
        <position position="97"/>
    </location>
    <ligand>
        <name>substrate</name>
    </ligand>
</feature>
<feature type="binding site" evidence="1">
    <location>
        <begin position="179"/>
        <end position="231"/>
    </location>
    <ligand>
        <name>NADP(+)</name>
        <dbReference type="ChEBI" id="CHEBI:58349"/>
    </ligand>
</feature>
<sequence>MSIPVFGLGTFRLQDQIVIDSVSQALTLGYRAIDTAQIYENEAPVGQAIQESGINRDELFITTKIWIANLSKDKLIPSLRESIQKLKTDYVDLTLIHWPSPNDEVSVAEFMSELLKAKGLGLTRQIGISNFTIDLMKQAIAAVGAEEIATNQIELSPLLQNRNVVDFAKQNGIAVTSYMTLAYGKALAEPVIKTIAEQHGATPAQVILSWAMQLGYGVIPSSTKAANLASNLLAQKLCLNAADMALIATLDRNERLVSPDGLAPKWD</sequence>
<comment type="function">
    <text evidence="2">Aldo-keto reductase that significantly contributes to cellular methylglyoxal detoxification by catalyzing the NADPH-dependent conversion of methylglyoxal to acetol.</text>
</comment>
<comment type="catalytic activity">
    <reaction evidence="2">
        <text>hydroxyacetone + NADP(+) = methylglyoxal + NADPH + H(+)</text>
        <dbReference type="Rhea" id="RHEA:27986"/>
        <dbReference type="ChEBI" id="CHEBI:15378"/>
        <dbReference type="ChEBI" id="CHEBI:17158"/>
        <dbReference type="ChEBI" id="CHEBI:27957"/>
        <dbReference type="ChEBI" id="CHEBI:57783"/>
        <dbReference type="ChEBI" id="CHEBI:58349"/>
    </reaction>
</comment>
<comment type="subunit">
    <text evidence="2">Monomer.</text>
</comment>
<comment type="subcellular location">
    <subcellularLocation>
        <location evidence="3">Cytoplasm</location>
    </subcellularLocation>
</comment>
<comment type="similarity">
    <text evidence="3">Belongs to the aldo/keto reductase family.</text>
</comment>